<proteinExistence type="inferred from homology"/>
<dbReference type="EMBL" id="CP000002">
    <property type="protein sequence ID" value="AAU23464.1"/>
    <property type="molecule type" value="Genomic_DNA"/>
</dbReference>
<dbReference type="EMBL" id="AE017333">
    <property type="protein sequence ID" value="AAU40823.1"/>
    <property type="molecule type" value="Genomic_DNA"/>
</dbReference>
<dbReference type="RefSeq" id="WP_003181972.1">
    <property type="nucleotide sequence ID" value="NC_006322.1"/>
</dbReference>
<dbReference type="SMR" id="Q65JE1"/>
<dbReference type="STRING" id="279010.BL03664"/>
<dbReference type="GeneID" id="92861479"/>
<dbReference type="KEGG" id="bld:BLi01929"/>
<dbReference type="KEGG" id="bli:BL03664"/>
<dbReference type="eggNOG" id="COG0323">
    <property type="taxonomic scope" value="Bacteria"/>
</dbReference>
<dbReference type="HOGENOM" id="CLU_004131_4_1_9"/>
<dbReference type="Proteomes" id="UP000000606">
    <property type="component" value="Chromosome"/>
</dbReference>
<dbReference type="GO" id="GO:0032300">
    <property type="term" value="C:mismatch repair complex"/>
    <property type="evidence" value="ECO:0007669"/>
    <property type="project" value="InterPro"/>
</dbReference>
<dbReference type="GO" id="GO:0005524">
    <property type="term" value="F:ATP binding"/>
    <property type="evidence" value="ECO:0007669"/>
    <property type="project" value="InterPro"/>
</dbReference>
<dbReference type="GO" id="GO:0016887">
    <property type="term" value="F:ATP hydrolysis activity"/>
    <property type="evidence" value="ECO:0007669"/>
    <property type="project" value="InterPro"/>
</dbReference>
<dbReference type="GO" id="GO:0140664">
    <property type="term" value="F:ATP-dependent DNA damage sensor activity"/>
    <property type="evidence" value="ECO:0007669"/>
    <property type="project" value="InterPro"/>
</dbReference>
<dbReference type="GO" id="GO:0030983">
    <property type="term" value="F:mismatched DNA binding"/>
    <property type="evidence" value="ECO:0007669"/>
    <property type="project" value="InterPro"/>
</dbReference>
<dbReference type="GO" id="GO:0006298">
    <property type="term" value="P:mismatch repair"/>
    <property type="evidence" value="ECO:0007669"/>
    <property type="project" value="UniProtKB-UniRule"/>
</dbReference>
<dbReference type="CDD" id="cd16926">
    <property type="entry name" value="HATPase_MutL-MLH-PMS-like"/>
    <property type="match status" value="1"/>
</dbReference>
<dbReference type="CDD" id="cd00782">
    <property type="entry name" value="MutL_Trans"/>
    <property type="match status" value="1"/>
</dbReference>
<dbReference type="FunFam" id="3.30.1370.100:FF:000004">
    <property type="entry name" value="DNA mismatch repair endonuclease MutL"/>
    <property type="match status" value="1"/>
</dbReference>
<dbReference type="FunFam" id="3.30.230.10:FF:000036">
    <property type="entry name" value="DNA mismatch repair endonuclease MutL"/>
    <property type="match status" value="1"/>
</dbReference>
<dbReference type="FunFam" id="3.30.565.10:FF:000003">
    <property type="entry name" value="DNA mismatch repair endonuclease MutL"/>
    <property type="match status" value="1"/>
</dbReference>
<dbReference type="Gene3D" id="3.30.230.10">
    <property type="match status" value="1"/>
</dbReference>
<dbReference type="Gene3D" id="3.30.565.10">
    <property type="entry name" value="Histidine kinase-like ATPase, C-terminal domain"/>
    <property type="match status" value="1"/>
</dbReference>
<dbReference type="Gene3D" id="3.30.1540.20">
    <property type="entry name" value="MutL, C-terminal domain, dimerisation subdomain"/>
    <property type="match status" value="1"/>
</dbReference>
<dbReference type="Gene3D" id="3.30.1370.100">
    <property type="entry name" value="MutL, C-terminal domain, regulatory subdomain"/>
    <property type="match status" value="1"/>
</dbReference>
<dbReference type="HAMAP" id="MF_00149">
    <property type="entry name" value="DNA_mis_repair"/>
    <property type="match status" value="1"/>
</dbReference>
<dbReference type="InterPro" id="IPR014762">
    <property type="entry name" value="DNA_mismatch_repair_CS"/>
</dbReference>
<dbReference type="InterPro" id="IPR020667">
    <property type="entry name" value="DNA_mismatch_repair_MutL"/>
</dbReference>
<dbReference type="InterPro" id="IPR013507">
    <property type="entry name" value="DNA_mismatch_S5_2-like"/>
</dbReference>
<dbReference type="InterPro" id="IPR036890">
    <property type="entry name" value="HATPase_C_sf"/>
</dbReference>
<dbReference type="InterPro" id="IPR002099">
    <property type="entry name" value="MutL/Mlh/PMS"/>
</dbReference>
<dbReference type="InterPro" id="IPR038973">
    <property type="entry name" value="MutL/Mlh/Pms-like"/>
</dbReference>
<dbReference type="InterPro" id="IPR014790">
    <property type="entry name" value="MutL_C"/>
</dbReference>
<dbReference type="InterPro" id="IPR042120">
    <property type="entry name" value="MutL_C_dimsub"/>
</dbReference>
<dbReference type="InterPro" id="IPR042121">
    <property type="entry name" value="MutL_C_regsub"/>
</dbReference>
<dbReference type="InterPro" id="IPR037198">
    <property type="entry name" value="MutL_C_sf"/>
</dbReference>
<dbReference type="InterPro" id="IPR020568">
    <property type="entry name" value="Ribosomal_Su5_D2-typ_SF"/>
</dbReference>
<dbReference type="InterPro" id="IPR014721">
    <property type="entry name" value="Ribsml_uS5_D2-typ_fold_subgr"/>
</dbReference>
<dbReference type="NCBIfam" id="TIGR00585">
    <property type="entry name" value="mutl"/>
    <property type="match status" value="1"/>
</dbReference>
<dbReference type="NCBIfam" id="NF000950">
    <property type="entry name" value="PRK00095.1-3"/>
    <property type="match status" value="1"/>
</dbReference>
<dbReference type="PANTHER" id="PTHR10073">
    <property type="entry name" value="DNA MISMATCH REPAIR PROTEIN MLH, PMS, MUTL"/>
    <property type="match status" value="1"/>
</dbReference>
<dbReference type="PANTHER" id="PTHR10073:SF12">
    <property type="entry name" value="DNA MISMATCH REPAIR PROTEIN MLH1"/>
    <property type="match status" value="1"/>
</dbReference>
<dbReference type="Pfam" id="PF01119">
    <property type="entry name" value="DNA_mis_repair"/>
    <property type="match status" value="1"/>
</dbReference>
<dbReference type="Pfam" id="PF13589">
    <property type="entry name" value="HATPase_c_3"/>
    <property type="match status" value="1"/>
</dbReference>
<dbReference type="Pfam" id="PF08676">
    <property type="entry name" value="MutL_C"/>
    <property type="match status" value="1"/>
</dbReference>
<dbReference type="SMART" id="SM01340">
    <property type="entry name" value="DNA_mis_repair"/>
    <property type="match status" value="1"/>
</dbReference>
<dbReference type="SMART" id="SM00853">
    <property type="entry name" value="MutL_C"/>
    <property type="match status" value="1"/>
</dbReference>
<dbReference type="SUPFAM" id="SSF55874">
    <property type="entry name" value="ATPase domain of HSP90 chaperone/DNA topoisomerase II/histidine kinase"/>
    <property type="match status" value="1"/>
</dbReference>
<dbReference type="SUPFAM" id="SSF118116">
    <property type="entry name" value="DNA mismatch repair protein MutL"/>
    <property type="match status" value="1"/>
</dbReference>
<dbReference type="SUPFAM" id="SSF54211">
    <property type="entry name" value="Ribosomal protein S5 domain 2-like"/>
    <property type="match status" value="1"/>
</dbReference>
<dbReference type="PROSITE" id="PS00058">
    <property type="entry name" value="DNA_MISMATCH_REPAIR_1"/>
    <property type="match status" value="1"/>
</dbReference>
<organism>
    <name type="scientific">Bacillus licheniformis (strain ATCC 14580 / DSM 13 / JCM 2505 / CCUG 7422 / NBRC 12200 / NCIMB 9375 / NCTC 10341 / NRRL NRS-1264 / Gibson 46)</name>
    <dbReference type="NCBI Taxonomy" id="279010"/>
    <lineage>
        <taxon>Bacteria</taxon>
        <taxon>Bacillati</taxon>
        <taxon>Bacillota</taxon>
        <taxon>Bacilli</taxon>
        <taxon>Bacillales</taxon>
        <taxon>Bacillaceae</taxon>
        <taxon>Bacillus</taxon>
    </lineage>
</organism>
<feature type="chain" id="PRO_1000009982" description="DNA mismatch repair protein MutL">
    <location>
        <begin position="1"/>
        <end position="636"/>
    </location>
</feature>
<feature type="region of interest" description="Disordered" evidence="2">
    <location>
        <begin position="341"/>
        <end position="420"/>
    </location>
</feature>
<feature type="compositionally biased region" description="Basic and acidic residues" evidence="2">
    <location>
        <begin position="348"/>
        <end position="358"/>
    </location>
</feature>
<gene>
    <name evidence="1" type="primary">mutL</name>
    <name type="ordered locus">BLi01929</name>
    <name type="ordered locus">BL03664</name>
</gene>
<evidence type="ECO:0000255" key="1">
    <source>
        <dbReference type="HAMAP-Rule" id="MF_00149"/>
    </source>
</evidence>
<evidence type="ECO:0000256" key="2">
    <source>
        <dbReference type="SAM" id="MobiDB-lite"/>
    </source>
</evidence>
<name>MUTL_BACLD</name>
<protein>
    <recommendedName>
        <fullName evidence="1">DNA mismatch repair protein MutL</fullName>
    </recommendedName>
</protein>
<comment type="function">
    <text evidence="1">This protein is involved in the repair of mismatches in DNA. It is required for dam-dependent methyl-directed DNA mismatch repair. May act as a 'molecular matchmaker', a protein that promotes the formation of a stable complex between two or more DNA-binding proteins in an ATP-dependent manner without itself being part of a final effector complex.</text>
</comment>
<comment type="similarity">
    <text evidence="1">Belongs to the DNA mismatch repair MutL/HexB family.</text>
</comment>
<accession>Q65JE1</accession>
<accession>Q62UU5</accession>
<keyword id="KW-0227">DNA damage</keyword>
<keyword id="KW-0234">DNA repair</keyword>
<keyword id="KW-1185">Reference proteome</keyword>
<sequence>MAKIVQLPDDLSNKIAAGEVVERPASVVKELVENAIDANSSVIEIDVEEAGLASIKVLDDGEGMDAEDCRTAFLRHATSKIKDENDLFRVRTLGFRGEALPSIASVSHLSIKTSTGEGAGTHLTLQGGRIISEQKAPSRRGTEITVTNLFFNTPARLKYMKTIHTELGNITDVVNRIALAHPEVSIRLRHQGKTLLQTNGNGDVRHVLAAIYGTAVAKKMLPLEARSLDFEVKGYIALPEITRASRNYMSSVVNGRYIKNFPLVKAIHEGYHTLLPIGRHPITFIEINMDPLLVDVNVHPSKLEVRLSKETELHELIRDAIKDVFKQQQLIPSVQVPKKTAPLINKPEQQKLDFDQVREPAPLSDSDVEREYKPEPSFSAMKLSSLVKDPPPSAPVEREENVMQDTEPEWPGAEEYTPEAAPAVQAEPEQAGENVQDEETPKERVPIMYPIGQMHGTYILAQNENGLYIIDQHAAQERIKYEYFREKVGEVESEVQDLLVPLTFHYSKNEALTIDQHLDDLAKVGVFLESFGAGSYIVRCHPTWFPKGEETTIIEDIIQQVLDDRTIDIKKLREEAAIMMSCKGSIKANHHLRDDEITALLDELRRTSDPFTCPHGRPIIIHYSTYEMEKMFKRVM</sequence>
<reference key="1">
    <citation type="journal article" date="2004" name="J. Mol. Microbiol. Biotechnol.">
        <title>The complete genome sequence of Bacillus licheniformis DSM13, an organism with great industrial potential.</title>
        <authorList>
            <person name="Veith B."/>
            <person name="Herzberg C."/>
            <person name="Steckel S."/>
            <person name="Feesche J."/>
            <person name="Maurer K.H."/>
            <person name="Ehrenreich P."/>
            <person name="Baeumer S."/>
            <person name="Henne A."/>
            <person name="Liesegang H."/>
            <person name="Merkl R."/>
            <person name="Ehrenreich A."/>
            <person name="Gottschalk G."/>
        </authorList>
    </citation>
    <scope>NUCLEOTIDE SEQUENCE [LARGE SCALE GENOMIC DNA]</scope>
    <source>
        <strain>ATCC 14580 / DSM 13 / JCM 2505 / CCUG 7422 / NBRC 12200 / NCIMB 9375 / NCTC 10341 / NRRL NRS-1264 / Gibson 46</strain>
    </source>
</reference>
<reference key="2">
    <citation type="journal article" date="2004" name="Genome Biol.">
        <title>Complete genome sequence of the industrial bacterium Bacillus licheniformis and comparisons with closely related Bacillus species.</title>
        <authorList>
            <person name="Rey M.W."/>
            <person name="Ramaiya P."/>
            <person name="Nelson B.A."/>
            <person name="Brody-Karpin S.D."/>
            <person name="Zaretsky E.J."/>
            <person name="Tang M."/>
            <person name="Lopez de Leon A."/>
            <person name="Xiang H."/>
            <person name="Gusti V."/>
            <person name="Clausen I.G."/>
            <person name="Olsen P.B."/>
            <person name="Rasmussen M.D."/>
            <person name="Andersen J.T."/>
            <person name="Joergensen P.L."/>
            <person name="Larsen T.S."/>
            <person name="Sorokin A."/>
            <person name="Bolotin A."/>
            <person name="Lapidus A."/>
            <person name="Galleron N."/>
            <person name="Ehrlich S.D."/>
            <person name="Berka R.M."/>
        </authorList>
    </citation>
    <scope>NUCLEOTIDE SEQUENCE [LARGE SCALE GENOMIC DNA]</scope>
    <source>
        <strain>ATCC 14580 / DSM 13 / JCM 2505 / CCUG 7422 / NBRC 12200 / NCIMB 9375 / NCTC 10341 / NRRL NRS-1264 / Gibson 46</strain>
    </source>
</reference>